<sequence length="581" mass="66705">MSKLKNLNREFISNLKSHKLITDAKRNLILSILKSTTTKREARNYLNKYQNQFDFGDLKISSSAKYEQDVSKLTKRDSQRELFVNRYLNKQNPFINIYDDETKLKKIPLRVALFKLKFLNIDPKEWRGIAETFKRLVNLGISPIVFLDYDHLPTDSFKYNELYMINQVNKVMNYLGKPEEEGNLKTTVLRSLFTVENKERGPVINSLESILIPLYQGIIPFIQPIIYNAESTFQQFINSNQLLYSLCESLLDKKDLLSVEKIVMIDPIGGIPSVERNQTSHVFINLSQEYSDIVSELYIGHIEPDQRDLHLANLNTMHEILTLASSKSGNDDTTGIITTPFIMSVNDDLINPIIYNVLTDRPIISSSLPSSNNRTPQLSTSILKKGVDVRSYDADNYARKFTLHNLIEDELVDKNRLVALLDDSFGKNLDTDSYFDRINNSLATLVIVGDYDGAAIITWEYSGTNKIAYLDKFAIAKKNQGLPGLADVIFKIILSSHPHELIWRSRKVNPVNKWYFERCVGSMSSPESQWRIFYTGDIFNRRIDKRRKRIVGSEAVNISDKLVQYSEICEGIPPSFFSSKE</sequence>
<reference key="1">
    <citation type="journal article" date="2007" name="Nat. Biotechnol.">
        <title>Genome sequence of the lignocellulose-bioconverting and xylose-fermenting yeast Pichia stipitis.</title>
        <authorList>
            <person name="Jeffries T.W."/>
            <person name="Grigoriev I.V."/>
            <person name="Grimwood J."/>
            <person name="Laplaza J.M."/>
            <person name="Aerts A."/>
            <person name="Salamov A."/>
            <person name="Schmutz J."/>
            <person name="Lindquist E."/>
            <person name="Dehal P."/>
            <person name="Shapiro H."/>
            <person name="Jin Y.-S."/>
            <person name="Passoth V."/>
            <person name="Richardson P.M."/>
        </authorList>
    </citation>
    <scope>NUCLEOTIDE SEQUENCE [LARGE SCALE GENOMIC DNA]</scope>
    <source>
        <strain>ATCC 58785 / CBS 6054 / NBRC 10063 / NRRL Y-11545</strain>
    </source>
</reference>
<protein>
    <recommendedName>
        <fullName>Amino-acid acetyltransferase, mitochondrial</fullName>
        <ecNumber>2.3.1.1</ecNumber>
    </recommendedName>
    <alternativeName>
        <fullName>Arginine-requiring protein 2</fullName>
    </alternativeName>
    <alternativeName>
        <fullName>Glutamate N-acetyltransferase</fullName>
    </alternativeName>
    <alternativeName>
        <fullName>N-acetylglutamate synthase</fullName>
        <shortName>AGS</shortName>
        <shortName>NAGS</shortName>
    </alternativeName>
</protein>
<gene>
    <name type="primary">ARG2</name>
    <name type="ORF">PICST_51037</name>
</gene>
<organism>
    <name type="scientific">Scheffersomyces stipitis (strain ATCC 58785 / CBS 6054 / NBRC 10063 / NRRL Y-11545)</name>
    <name type="common">Yeast</name>
    <name type="synonym">Pichia stipitis</name>
    <dbReference type="NCBI Taxonomy" id="322104"/>
    <lineage>
        <taxon>Eukaryota</taxon>
        <taxon>Fungi</taxon>
        <taxon>Dikarya</taxon>
        <taxon>Ascomycota</taxon>
        <taxon>Saccharomycotina</taxon>
        <taxon>Pichiomycetes</taxon>
        <taxon>Debaryomycetaceae</taxon>
        <taxon>Scheffersomyces</taxon>
    </lineage>
</organism>
<proteinExistence type="inferred from homology"/>
<name>NAGS_PICST</name>
<accession>A3GG03</accession>
<feature type="transit peptide" description="Mitochondrion" evidence="2">
    <location>
        <begin position="1"/>
        <end status="unknown"/>
    </location>
</feature>
<feature type="chain" id="PRO_0000372575" description="Amino-acid acetyltransferase, mitochondrial">
    <location>
        <begin status="unknown"/>
        <end position="581"/>
    </location>
</feature>
<feature type="domain" description="N-acetyltransferase" evidence="3">
    <location>
        <begin position="401"/>
        <end position="558"/>
    </location>
</feature>
<dbReference type="EC" id="2.3.1.1"/>
<dbReference type="EMBL" id="AAVQ01000001">
    <property type="protein sequence ID" value="EAZ63850.2"/>
    <property type="molecule type" value="Genomic_DNA"/>
</dbReference>
<dbReference type="RefSeq" id="XP_001387873.2">
    <property type="nucleotide sequence ID" value="XM_001387836.1"/>
</dbReference>
<dbReference type="SMR" id="A3GG03"/>
<dbReference type="FunCoup" id="A3GG03">
    <property type="interactions" value="113"/>
</dbReference>
<dbReference type="STRING" id="322104.A3GG03"/>
<dbReference type="GeneID" id="4851202"/>
<dbReference type="KEGG" id="pic:PICST_51037"/>
<dbReference type="eggNOG" id="KOG2436">
    <property type="taxonomic scope" value="Eukaryota"/>
</dbReference>
<dbReference type="HOGENOM" id="CLU_013088_0_0_1"/>
<dbReference type="InParanoid" id="A3GG03"/>
<dbReference type="OMA" id="NAMVRDC"/>
<dbReference type="OrthoDB" id="5585968at2759"/>
<dbReference type="UniPathway" id="UPA00068">
    <property type="reaction ID" value="UER00106"/>
</dbReference>
<dbReference type="Proteomes" id="UP000002258">
    <property type="component" value="Chromosome 1"/>
</dbReference>
<dbReference type="GO" id="GO:0005759">
    <property type="term" value="C:mitochondrial matrix"/>
    <property type="evidence" value="ECO:0007669"/>
    <property type="project" value="TreeGrafter"/>
</dbReference>
<dbReference type="GO" id="GO:0004042">
    <property type="term" value="F:L-glutamate N-acetyltransferase activity"/>
    <property type="evidence" value="ECO:0007669"/>
    <property type="project" value="InterPro"/>
</dbReference>
<dbReference type="GO" id="GO:0006526">
    <property type="term" value="P:L-arginine biosynthetic process"/>
    <property type="evidence" value="ECO:0007669"/>
    <property type="project" value="UniProtKB-UniPathway"/>
</dbReference>
<dbReference type="GO" id="GO:0006592">
    <property type="term" value="P:ornithine biosynthetic process"/>
    <property type="evidence" value="ECO:0007669"/>
    <property type="project" value="TreeGrafter"/>
</dbReference>
<dbReference type="Gene3D" id="3.40.630.30">
    <property type="match status" value="1"/>
</dbReference>
<dbReference type="InterPro" id="IPR011190">
    <property type="entry name" value="GlcNAc_Synth_fun"/>
</dbReference>
<dbReference type="InterPro" id="IPR006855">
    <property type="entry name" value="Vertebrate-like_GNAT_dom"/>
</dbReference>
<dbReference type="PANTHER" id="PTHR23342:SF4">
    <property type="entry name" value="AMINO-ACID ACETYLTRANSFERASE, MITOCHONDRIAL"/>
    <property type="match status" value="1"/>
</dbReference>
<dbReference type="PANTHER" id="PTHR23342">
    <property type="entry name" value="N-ACETYLGLUTAMATE SYNTHASE"/>
    <property type="match status" value="1"/>
</dbReference>
<dbReference type="Pfam" id="PF04768">
    <property type="entry name" value="NAT"/>
    <property type="match status" value="1"/>
</dbReference>
<dbReference type="PIRSF" id="PIRSF007892">
    <property type="entry name" value="NAGS_fungal"/>
    <property type="match status" value="1"/>
</dbReference>
<dbReference type="PROSITE" id="PS51731">
    <property type="entry name" value="GNAT_NAGS"/>
    <property type="match status" value="1"/>
</dbReference>
<comment type="function">
    <text evidence="1">N-acetylglutamate synthase involved in arginine biosynthesis.</text>
</comment>
<comment type="catalytic activity">
    <reaction>
        <text>L-glutamate + acetyl-CoA = N-acetyl-L-glutamate + CoA + H(+)</text>
        <dbReference type="Rhea" id="RHEA:24292"/>
        <dbReference type="ChEBI" id="CHEBI:15378"/>
        <dbReference type="ChEBI" id="CHEBI:29985"/>
        <dbReference type="ChEBI" id="CHEBI:44337"/>
        <dbReference type="ChEBI" id="CHEBI:57287"/>
        <dbReference type="ChEBI" id="CHEBI:57288"/>
        <dbReference type="EC" id="2.3.1.1"/>
    </reaction>
</comment>
<comment type="pathway">
    <text>Amino-acid biosynthesis; L-arginine biosynthesis; N(2)-acetyl-L-ornithine from L-glutamate: step 1/4.</text>
</comment>
<comment type="subcellular location">
    <subcellularLocation>
        <location evidence="1">Mitochondrion</location>
    </subcellularLocation>
</comment>
<comment type="similarity">
    <text evidence="4">Belongs to the acetyltransferase family.</text>
</comment>
<evidence type="ECO:0000250" key="1"/>
<evidence type="ECO:0000255" key="2"/>
<evidence type="ECO:0000255" key="3">
    <source>
        <dbReference type="PROSITE-ProRule" id="PRU00532"/>
    </source>
</evidence>
<evidence type="ECO:0000305" key="4"/>
<keyword id="KW-0012">Acyltransferase</keyword>
<keyword id="KW-0028">Amino-acid biosynthesis</keyword>
<keyword id="KW-0496">Mitochondrion</keyword>
<keyword id="KW-1185">Reference proteome</keyword>
<keyword id="KW-0808">Transferase</keyword>
<keyword id="KW-0809">Transit peptide</keyword>